<dbReference type="EMBL" id="AF012919">
    <property type="protein sequence ID" value="AAB65434.1"/>
    <property type="molecule type" value="mRNA"/>
</dbReference>
<dbReference type="PIR" id="C44582">
    <property type="entry name" value="B37330"/>
</dbReference>
<dbReference type="RefSeq" id="NP_001291520.1">
    <property type="nucleotide sequence ID" value="NM_001304591.1"/>
</dbReference>
<dbReference type="PDB" id="2VZN">
    <property type="method" value="X-ray"/>
    <property type="resolution" value="3.05 A"/>
    <property type="chains" value="A/B=23-234"/>
</dbReference>
<dbReference type="PDBsum" id="2VZN"/>
<dbReference type="SMR" id="P35778"/>
<dbReference type="Allergome" id="3483">
    <property type="allergen name" value="Sol i 3.0101"/>
</dbReference>
<dbReference type="Allergome" id="632">
    <property type="allergen name" value="Sol i 3"/>
</dbReference>
<dbReference type="EnsemblMetazoa" id="NM_001304591.1">
    <property type="protein sequence ID" value="NP_001291520.1"/>
    <property type="gene ID" value="LOC105199703"/>
</dbReference>
<dbReference type="GeneID" id="105199703"/>
<dbReference type="KEGG" id="soc:105199703"/>
<dbReference type="HOGENOM" id="CLU_035730_7_2_1"/>
<dbReference type="OMA" id="YSCEIED"/>
<dbReference type="OrthoDB" id="43654at2759"/>
<dbReference type="EvolutionaryTrace" id="P35778"/>
<dbReference type="GO" id="GO:0005576">
    <property type="term" value="C:extracellular region"/>
    <property type="evidence" value="ECO:0007669"/>
    <property type="project" value="UniProtKB-SubCell"/>
</dbReference>
<dbReference type="CDD" id="cd05380">
    <property type="entry name" value="CAP_euk"/>
    <property type="match status" value="1"/>
</dbReference>
<dbReference type="Gene3D" id="3.40.33.10">
    <property type="entry name" value="CAP"/>
    <property type="match status" value="1"/>
</dbReference>
<dbReference type="InterPro" id="IPR018244">
    <property type="entry name" value="Allrgn_V5/Tpx1_CS"/>
</dbReference>
<dbReference type="InterPro" id="IPR014044">
    <property type="entry name" value="CAP_dom"/>
</dbReference>
<dbReference type="InterPro" id="IPR035940">
    <property type="entry name" value="CAP_sf"/>
</dbReference>
<dbReference type="InterPro" id="IPR001283">
    <property type="entry name" value="CRISP-related"/>
</dbReference>
<dbReference type="InterPro" id="IPR034763">
    <property type="entry name" value="P14a_insect"/>
</dbReference>
<dbReference type="InterPro" id="IPR002413">
    <property type="entry name" value="V5_allergen-like"/>
</dbReference>
<dbReference type="PANTHER" id="PTHR10334">
    <property type="entry name" value="CYSTEINE-RICH SECRETORY PROTEIN-RELATED"/>
    <property type="match status" value="1"/>
</dbReference>
<dbReference type="Pfam" id="PF00188">
    <property type="entry name" value="CAP"/>
    <property type="match status" value="1"/>
</dbReference>
<dbReference type="PIRSF" id="PIRSF038921">
    <property type="entry name" value="P14a"/>
    <property type="match status" value="1"/>
</dbReference>
<dbReference type="PRINTS" id="PR00838">
    <property type="entry name" value="V5ALLERGEN"/>
</dbReference>
<dbReference type="PRINTS" id="PR00837">
    <property type="entry name" value="V5TPXLIKE"/>
</dbReference>
<dbReference type="SMART" id="SM00198">
    <property type="entry name" value="SCP"/>
    <property type="match status" value="1"/>
</dbReference>
<dbReference type="SUPFAM" id="SSF55797">
    <property type="entry name" value="PR-1-like"/>
    <property type="match status" value="1"/>
</dbReference>
<dbReference type="PROSITE" id="PS01009">
    <property type="entry name" value="CRISP_1"/>
    <property type="match status" value="1"/>
</dbReference>
<dbReference type="PROSITE" id="PS01010">
    <property type="entry name" value="CRISP_2"/>
    <property type="match status" value="1"/>
</dbReference>
<protein>
    <recommendedName>
        <fullName>Venom allergen 3</fullName>
    </recommendedName>
    <alternativeName>
        <fullName evidence="6">Allergen Sol i III</fullName>
    </alternativeName>
    <alternativeName>
        <fullName evidence="7">Antigen 5</fullName>
        <shortName evidence="7">Ag5</shortName>
    </alternativeName>
    <alternativeName>
        <fullName evidence="7">Cysteine-rich venom protein</fullName>
        <shortName evidence="7">CRVP</shortName>
    </alternativeName>
    <alternativeName>
        <fullName>Venom allergen III</fullName>
    </alternativeName>
    <allergenName evidence="5">Sol i 3</allergenName>
</protein>
<sequence length="234" mass="26351">MELIVSILWLAITAENLANTLATNYCNLQSCKRNNAIHTMCQYTSPTPGPMCLEYSNVGFTDAEKDAIVNKHNELRQRVASGKEMRGTNGPQPPAVKMPNLTWDPELATIAQRWANQCTFEHDACRNVERFAVGQNIAATSSSGKNKSTPNEMILLWYNEVKDFDNRWISSFPSDDNILMKVGHYTQIVWAKTTKIGCGRIMFKEPDNWTKHYLVCNYGPAGNVLGAPIYEIKK</sequence>
<organism>
    <name type="scientific">Solenopsis invicta</name>
    <name type="common">Red imported fire ant</name>
    <name type="synonym">Solenopsis wagneri</name>
    <dbReference type="NCBI Taxonomy" id="13686"/>
    <lineage>
        <taxon>Eukaryota</taxon>
        <taxon>Metazoa</taxon>
        <taxon>Ecdysozoa</taxon>
        <taxon>Arthropoda</taxon>
        <taxon>Hexapoda</taxon>
        <taxon>Insecta</taxon>
        <taxon>Pterygota</taxon>
        <taxon>Neoptera</taxon>
        <taxon>Endopterygota</taxon>
        <taxon>Hymenoptera</taxon>
        <taxon>Apocrita</taxon>
        <taxon>Aculeata</taxon>
        <taxon>Formicoidea</taxon>
        <taxon>Formicidae</taxon>
        <taxon>Myrmicinae</taxon>
        <taxon>Solenopsis</taxon>
    </lineage>
</organism>
<accession>P35778</accession>
<accession>O16135</accession>
<accession>Q9TWZ2</accession>
<feature type="signal peptide" evidence="3 4">
    <location>
        <begin position="1"/>
        <end position="22"/>
    </location>
</feature>
<feature type="chain" id="PRO_0000006293" description="Venom allergen 3" evidence="4">
    <location>
        <begin position="23"/>
        <end position="234"/>
    </location>
</feature>
<feature type="domain" description="SCP">
    <location>
        <begin position="69"/>
        <end position="218"/>
    </location>
</feature>
<feature type="region of interest" description="Disordered" evidence="1">
    <location>
        <begin position="80"/>
        <end position="99"/>
    </location>
</feature>
<feature type="disulfide bond" evidence="2">
    <location>
        <begin position="26"/>
        <end position="41"/>
    </location>
</feature>
<feature type="disulfide bond" evidence="2">
    <location>
        <begin position="31"/>
        <end position="125"/>
    </location>
</feature>
<feature type="disulfide bond" evidence="2">
    <location>
        <begin position="52"/>
        <end position="118"/>
    </location>
</feature>
<feature type="disulfide bond" evidence="2">
    <location>
        <begin position="198"/>
        <end position="216"/>
    </location>
</feature>
<feature type="sequence conflict" description="In Ref. 3; AA sequence." evidence="7" ref="3">
    <original>G</original>
    <variation>E</variation>
    <location>
        <position position="183"/>
    </location>
</feature>
<feature type="sequence conflict" description="In Ref. 3; AA sequence." evidence="7" ref="3">
    <original>T</original>
    <variation>S</variation>
    <location>
        <position position="194"/>
    </location>
</feature>
<feature type="sequence conflict" description="In Ref. 3; AA sequence." evidence="7" ref="3">
    <original>G</original>
    <variation>A</variation>
    <location>
        <position position="199"/>
    </location>
</feature>
<feature type="helix" evidence="10">
    <location>
        <begin position="29"/>
        <end position="33"/>
    </location>
</feature>
<feature type="helix" evidence="10">
    <location>
        <begin position="39"/>
        <end position="42"/>
    </location>
</feature>
<feature type="helix" evidence="10">
    <location>
        <begin position="62"/>
        <end position="80"/>
    </location>
</feature>
<feature type="helix" evidence="10">
    <location>
        <begin position="105"/>
        <end position="115"/>
    </location>
</feature>
<feature type="strand" evidence="10">
    <location>
        <begin position="129"/>
        <end position="131"/>
    </location>
</feature>
<feature type="strand" evidence="10">
    <location>
        <begin position="134"/>
        <end position="142"/>
    </location>
</feature>
<feature type="helix" evidence="10">
    <location>
        <begin position="150"/>
        <end position="158"/>
    </location>
</feature>
<feature type="helix" evidence="10">
    <location>
        <begin position="159"/>
        <end position="163"/>
    </location>
</feature>
<feature type="helix" evidence="10">
    <location>
        <begin position="166"/>
        <end position="168"/>
    </location>
</feature>
<feature type="strand" evidence="10">
    <location>
        <begin position="169"/>
        <end position="171"/>
    </location>
</feature>
<feature type="helix" evidence="10">
    <location>
        <begin position="176"/>
        <end position="188"/>
    </location>
</feature>
<feature type="strand" evidence="10">
    <location>
        <begin position="195"/>
        <end position="204"/>
    </location>
</feature>
<feature type="strand" evidence="10">
    <location>
        <begin position="210"/>
        <end position="220"/>
    </location>
</feature>
<reference key="1">
    <citation type="submission" date="1997-07" db="EMBL/GenBank/DDBJ databases">
        <authorList>
            <person name="Hoffman D.R."/>
            <person name="Farrar D."/>
            <person name="Schmidt M."/>
            <person name="McConnell T.J."/>
        </authorList>
    </citation>
    <scope>NUCLEOTIDE SEQUENCE [MRNA]</scope>
    <source>
        <tissue>Venom gland</tissue>
    </source>
</reference>
<reference key="2">
    <citation type="journal article" date="1995" name="Allergy">
        <title>Fire ant venom allergy.</title>
        <authorList>
            <person name="Hoffman D.R."/>
        </authorList>
    </citation>
    <scope>NUCLEOTIDE SEQUENCE [MRNA] OF 23-234</scope>
    <source>
        <tissue>Venom gland</tissue>
    </source>
</reference>
<reference key="3">
    <citation type="journal article" date="1993" name="J. Allergy Clin. Immunol.">
        <title>Allergens in Hymenoptera venom XXIV: the amino acid sequences of imported fire ant venom allergens Sol i II, Sol i III, and Sol i IV.</title>
        <authorList>
            <person name="Hoffman D.R."/>
        </authorList>
    </citation>
    <scope>PROTEIN SEQUENCE OF 23-234</scope>
    <scope>SUBCELLULAR LOCATION</scope>
    <source>
        <tissue>Venom</tissue>
    </source>
</reference>
<reference key="4">
    <citation type="journal article" date="1990" name="J. Allergy Clin. Immunol.">
        <title>Allergens in Hymenoptera venom. XXII. Comparison of venoms from two species of imported fire ants, Solenopsis invicta and richteri.</title>
        <authorList>
            <person name="Hoffman D.R."/>
            <person name="Smith A.M."/>
            <person name="Schmidt M."/>
            <person name="Moffitt J.E."/>
            <person name="Guralnick M."/>
        </authorList>
    </citation>
    <scope>PROTEIN SEQUENCE OF 23-45</scope>
    <scope>SUBCELLULAR LOCATION</scope>
    <source>
        <tissue>Venom</tissue>
    </source>
</reference>
<reference key="5">
    <citation type="journal article" date="2008" name="J. Mol. Biol.">
        <title>Crystal structure of the major allergen from fire ant venom, Sol i 3.</title>
        <authorList>
            <person name="Padavattan S."/>
            <person name="Schmidt M."/>
            <person name="Hoffman D.R."/>
            <person name="Markovic-Housley Z."/>
        </authorList>
    </citation>
    <scope>X-RAY CRYSTALLOGRAPHY (3.05 ANGSTROMS) OF 23-234</scope>
    <scope>DISULFIDE BONDS</scope>
</reference>
<evidence type="ECO:0000256" key="1">
    <source>
        <dbReference type="SAM" id="MobiDB-lite"/>
    </source>
</evidence>
<evidence type="ECO:0000269" key="2">
    <source>
    </source>
</evidence>
<evidence type="ECO:0000269" key="3">
    <source>
    </source>
</evidence>
<evidence type="ECO:0000269" key="4">
    <source>
    </source>
</evidence>
<evidence type="ECO:0000303" key="5">
    <source>
    </source>
</evidence>
<evidence type="ECO:0000303" key="6">
    <source>
    </source>
</evidence>
<evidence type="ECO:0000305" key="7"/>
<evidence type="ECO:0000305" key="8">
    <source>
    </source>
</evidence>
<evidence type="ECO:0000305" key="9">
    <source>
    </source>
</evidence>
<evidence type="ECO:0007829" key="10">
    <source>
        <dbReference type="PDB" id="2VZN"/>
    </source>
</evidence>
<keyword id="KW-0002">3D-structure</keyword>
<keyword id="KW-0020">Allergen</keyword>
<keyword id="KW-0903">Direct protein sequencing</keyword>
<keyword id="KW-1015">Disulfide bond</keyword>
<keyword id="KW-0964">Secreted</keyword>
<keyword id="KW-0732">Signal</keyword>
<name>VA3_SOLIN</name>
<proteinExistence type="evidence at protein level"/>
<comment type="subcellular location">
    <subcellularLocation>
        <location evidence="3 4">Secreted</location>
    </subcellularLocation>
</comment>
<comment type="tissue specificity">
    <text evidence="8 9">Expressed by the venom gland.</text>
</comment>
<comment type="allergen">
    <text evidence="4">Causes an allergic reaction in human. The most common cause of insect venom allergy in the southeastern United States is the imported fire ant.</text>
</comment>
<comment type="similarity">
    <text evidence="7">Belongs to the CRISP family.</text>
</comment>